<sequence length="173" mass="20329">MDTIVDFKALPYRKCVGILVFNYEGKVWVGRRLMTVSHANVDMSKLWQLPQGGINQGEKPIDAARRELYEETGIQSVKLIKEAQDWFEYDFPQELMGHVLNNKYRGQTQKWFSFQFTGEISEITINPPPDGNKAEFDQWKWVDLEELPSIVVSFKKHVYTQVVKEFRNSFKYL</sequence>
<keyword id="KW-0378">Hydrolase</keyword>
<gene>
    <name evidence="1" type="primary">rppH</name>
    <name type="synonym">ialA</name>
    <name type="synonym">invA</name>
    <name evidence="1" type="synonym">nudH</name>
</gene>
<reference key="1">
    <citation type="submission" date="1999-04" db="EMBL/GenBank/DDBJ databases">
        <title>Cloning of invasion-associated protein A (invA) gene from Bartonella clarridgeiae.</title>
        <authorList>
            <person name="Marston E.L."/>
        </authorList>
    </citation>
    <scope>NUCLEOTIDE SEQUENCE [GENOMIC DNA]</scope>
</reference>
<accession>Q9KK72</accession>
<protein>
    <recommendedName>
        <fullName evidence="1">RNA pyrophosphohydrolase</fullName>
        <ecNumber evidence="1">3.6.1.-</ecNumber>
    </recommendedName>
    <alternativeName>
        <fullName evidence="1">(Di)nucleoside polyphosphate hydrolase</fullName>
    </alternativeName>
</protein>
<name>RPPH_BARCL</name>
<comment type="function">
    <text evidence="1">Accelerates the degradation of transcripts by removing pyrophosphate from the 5'-end of triphosphorylated RNA, leading to a more labile monophosphorylated state that can stimulate subsequent ribonuclease cleavage.</text>
</comment>
<comment type="cofactor">
    <cofactor evidence="1">
        <name>a divalent metal cation</name>
        <dbReference type="ChEBI" id="CHEBI:60240"/>
    </cofactor>
</comment>
<comment type="similarity">
    <text evidence="1">Belongs to the Nudix hydrolase family. RppH subfamily.</text>
</comment>
<dbReference type="EC" id="3.6.1.-" evidence="1"/>
<dbReference type="EMBL" id="AF140364">
    <property type="protein sequence ID" value="AAF79926.1"/>
    <property type="molecule type" value="Genomic_DNA"/>
</dbReference>
<dbReference type="RefSeq" id="WP_013545414.1">
    <property type="nucleotide sequence ID" value="NZ_CP116497.1"/>
</dbReference>
<dbReference type="SMR" id="Q9KK72"/>
<dbReference type="OMA" id="PCVGIML"/>
<dbReference type="GO" id="GO:0034432">
    <property type="term" value="F:bis(5'-adenosyl)-pentaphosphatase activity"/>
    <property type="evidence" value="ECO:0007669"/>
    <property type="project" value="TreeGrafter"/>
</dbReference>
<dbReference type="GO" id="GO:0008893">
    <property type="term" value="F:guanosine-3',5'-bis(diphosphate) 3'-diphosphatase activity"/>
    <property type="evidence" value="ECO:0007669"/>
    <property type="project" value="TreeGrafter"/>
</dbReference>
<dbReference type="GO" id="GO:0006753">
    <property type="term" value="P:nucleoside phosphate metabolic process"/>
    <property type="evidence" value="ECO:0007669"/>
    <property type="project" value="TreeGrafter"/>
</dbReference>
<dbReference type="GO" id="GO:0019693">
    <property type="term" value="P:ribose phosphate metabolic process"/>
    <property type="evidence" value="ECO:0007669"/>
    <property type="project" value="TreeGrafter"/>
</dbReference>
<dbReference type="CDD" id="cd03671">
    <property type="entry name" value="NUDIX_Ap4A_hydrolase_plant_like"/>
    <property type="match status" value="1"/>
</dbReference>
<dbReference type="Gene3D" id="3.90.79.10">
    <property type="entry name" value="Nucleoside Triphosphate Pyrophosphohydrolase"/>
    <property type="match status" value="1"/>
</dbReference>
<dbReference type="HAMAP" id="MF_00298">
    <property type="entry name" value="Nudix_RppH"/>
    <property type="match status" value="1"/>
</dbReference>
<dbReference type="InterPro" id="IPR020476">
    <property type="entry name" value="Nudix_hydrolase"/>
</dbReference>
<dbReference type="InterPro" id="IPR015797">
    <property type="entry name" value="NUDIX_hydrolase-like_dom_sf"/>
</dbReference>
<dbReference type="InterPro" id="IPR020084">
    <property type="entry name" value="NUDIX_hydrolase_CS"/>
</dbReference>
<dbReference type="InterPro" id="IPR000086">
    <property type="entry name" value="NUDIX_hydrolase_dom"/>
</dbReference>
<dbReference type="InterPro" id="IPR022927">
    <property type="entry name" value="RppH"/>
</dbReference>
<dbReference type="NCBIfam" id="NF001938">
    <property type="entry name" value="PRK00714.1-5"/>
    <property type="match status" value="1"/>
</dbReference>
<dbReference type="PANTHER" id="PTHR11839:SF22">
    <property type="entry name" value="NUDIX HYDROLASE 26, CHLOROPLASTIC"/>
    <property type="match status" value="1"/>
</dbReference>
<dbReference type="PANTHER" id="PTHR11839">
    <property type="entry name" value="UDP/ADP-SUGAR PYROPHOSPHATASE"/>
    <property type="match status" value="1"/>
</dbReference>
<dbReference type="Pfam" id="PF00293">
    <property type="entry name" value="NUDIX"/>
    <property type="match status" value="1"/>
</dbReference>
<dbReference type="PRINTS" id="PR00502">
    <property type="entry name" value="NUDIXFAMILY"/>
</dbReference>
<dbReference type="SUPFAM" id="SSF55811">
    <property type="entry name" value="Nudix"/>
    <property type="match status" value="1"/>
</dbReference>
<dbReference type="PROSITE" id="PS51462">
    <property type="entry name" value="NUDIX"/>
    <property type="match status" value="1"/>
</dbReference>
<dbReference type="PROSITE" id="PS00893">
    <property type="entry name" value="NUDIX_BOX"/>
    <property type="match status" value="1"/>
</dbReference>
<feature type="chain" id="PRO_0000056993" description="RNA pyrophosphohydrolase">
    <location>
        <begin position="1"/>
        <end position="173"/>
    </location>
</feature>
<feature type="domain" description="Nudix hydrolase" evidence="1">
    <location>
        <begin position="11"/>
        <end position="164"/>
    </location>
</feature>
<feature type="short sequence motif" description="Nudix box">
    <location>
        <begin position="52"/>
        <end position="73"/>
    </location>
</feature>
<proteinExistence type="inferred from homology"/>
<evidence type="ECO:0000255" key="1">
    <source>
        <dbReference type="HAMAP-Rule" id="MF_00298"/>
    </source>
</evidence>
<organism>
    <name type="scientific">Bartonella clarridgeiae</name>
    <dbReference type="NCBI Taxonomy" id="56426"/>
    <lineage>
        <taxon>Bacteria</taxon>
        <taxon>Pseudomonadati</taxon>
        <taxon>Pseudomonadota</taxon>
        <taxon>Alphaproteobacteria</taxon>
        <taxon>Hyphomicrobiales</taxon>
        <taxon>Bartonellaceae</taxon>
        <taxon>Bartonella</taxon>
    </lineage>
</organism>